<geneLocation type="plasmid"/>
<reference key="1">
    <citation type="journal article" date="1994" name="J. Antimicrob. Chemother.">
        <title>Characterisation of a tet(M)-carrying plasmid from Neisseria meningitidis.</title>
        <authorList>
            <person name="Gascoyne-Binzi D.M."/>
            <person name="Heritage J."/>
            <person name="Hawkey P.M."/>
            <person name="Sprott M.S."/>
        </authorList>
    </citation>
    <scope>NUCLEOTIDE SEQUENCE [GENOMIC DNA]</scope>
    <source>
        <strain>23905</strain>
    </source>
</reference>
<feature type="chain" id="PRO_0000091498" description="Tetracycline resistance protein TetM">
    <location>
        <begin position="1"/>
        <end position="639"/>
    </location>
</feature>
<feature type="domain" description="tr-type G" evidence="2">
    <location>
        <begin position="1"/>
        <end position="242"/>
    </location>
</feature>
<feature type="binding site" evidence="1">
    <location>
        <begin position="10"/>
        <end position="17"/>
    </location>
    <ligand>
        <name>GTP</name>
        <dbReference type="ChEBI" id="CHEBI:37565"/>
    </ligand>
</feature>
<feature type="binding site" evidence="1">
    <location>
        <begin position="74"/>
        <end position="78"/>
    </location>
    <ligand>
        <name>GTP</name>
        <dbReference type="ChEBI" id="CHEBI:37565"/>
    </ligand>
</feature>
<feature type="binding site" evidence="1">
    <location>
        <begin position="128"/>
        <end position="131"/>
    </location>
    <ligand>
        <name>GTP</name>
        <dbReference type="ChEBI" id="CHEBI:37565"/>
    </ligand>
</feature>
<protein>
    <recommendedName>
        <fullName>Tetracycline resistance protein TetM</fullName>
        <shortName>Tet(M)</shortName>
    </recommendedName>
</protein>
<proteinExistence type="inferred from homology"/>
<organism>
    <name type="scientific">Neisseria meningitidis</name>
    <dbReference type="NCBI Taxonomy" id="487"/>
    <lineage>
        <taxon>Bacteria</taxon>
        <taxon>Pseudomonadati</taxon>
        <taxon>Pseudomonadota</taxon>
        <taxon>Betaproteobacteria</taxon>
        <taxon>Neisseriales</taxon>
        <taxon>Neisseriaceae</taxon>
        <taxon>Neisseria</taxon>
    </lineage>
</organism>
<evidence type="ECO:0000250" key="1"/>
<evidence type="ECO:0000255" key="2">
    <source>
        <dbReference type="PROSITE-ProRule" id="PRU01059"/>
    </source>
</evidence>
<name>TETM_NEIME</name>
<keyword id="KW-0046">Antibiotic resistance</keyword>
<keyword id="KW-0342">GTP-binding</keyword>
<keyword id="KW-0547">Nucleotide-binding</keyword>
<keyword id="KW-0614">Plasmid</keyword>
<keyword id="KW-0648">Protein biosynthesis</keyword>
<accession>Q51238</accession>
<comment type="function">
    <text>Abolishes the inhibitory effect of tetracyclin on protein synthesis by a non-covalent modification of the ribosomes.</text>
</comment>
<comment type="similarity">
    <text evidence="2">Belongs to the TRAFAC class translation factor GTPase superfamily. Classic translation factor GTPase family. TetM/TetO subfamily.</text>
</comment>
<sequence>MKIINIGVLAHVDAGKTTLTESLLYNSGAITELGSVDKGTTRTDNTLLERQRGITIQTGITSFQWENTKVNIIDTPGHMDFLAEVYRSLSVLDGAILLISAKDGVQAQTRILFHALRKMGIPTIFFINKIDQNGIDLSTVYQDIKEKLSAEIVIKQKVELYPNMCVTNFTESEQWDTVIEGNDDLLEKYMSGKSLEALELEQEESIRFHNCSLFPVYHGSAKNNIGIDNLIEVITNKFYSSTHRGPSELCGNVFKIEYTKKRQRLAYIRLYSGVLHLRDSVRVSEKEKIKVTEMYTSINGELCKIDRAYSGEIVILQNEFLKLNSVLGDTKLLPQRKKIENPHPLLRTTVEPSKPEQREMLLDALLEISDSDPLLRYYVDSTTHEIILSFLGKVQMEVISALLQEKYHVEIELKEPTVIYMERPLKNAEYTIHIEVPPNPFWASIGLSVSPLPLGSGMQYESSVSLGYLNQSFQNAVMEGIRYGCEQGLYGWNVTDCKICFKYGLYYSPVSTPADFRMLAPIVLEQVLKKAGTELLEPYLSFKIYTPQEYLSRAYNDAPKYCANIVDTQLKNNEVILSGEIPARCIQEYRSDLTFFTNGRSVCLTELKGYHVTTGEPVCQPRRPNSRIDKVRYMFNKIT</sequence>
<gene>
    <name type="primary">tetM</name>
    <name type="synonym">tet(M)</name>
</gene>
<dbReference type="EMBL" id="X75073">
    <property type="protein sequence ID" value="CAA52967.1"/>
    <property type="molecule type" value="Genomic_DNA"/>
</dbReference>
<dbReference type="PIR" id="S37283">
    <property type="entry name" value="S37283"/>
</dbReference>
<dbReference type="RefSeq" id="WP_063856109.1">
    <property type="nucleotide sequence ID" value="NG_048215.1"/>
</dbReference>
<dbReference type="SMR" id="Q51238"/>
<dbReference type="GO" id="GO:0005525">
    <property type="term" value="F:GTP binding"/>
    <property type="evidence" value="ECO:0007669"/>
    <property type="project" value="UniProtKB-KW"/>
</dbReference>
<dbReference type="GO" id="GO:0003924">
    <property type="term" value="F:GTPase activity"/>
    <property type="evidence" value="ECO:0007669"/>
    <property type="project" value="InterPro"/>
</dbReference>
<dbReference type="GO" id="GO:0046677">
    <property type="term" value="P:response to antibiotic"/>
    <property type="evidence" value="ECO:0007669"/>
    <property type="project" value="UniProtKB-KW"/>
</dbReference>
<dbReference type="GO" id="GO:0032790">
    <property type="term" value="P:ribosome disassembly"/>
    <property type="evidence" value="ECO:0007669"/>
    <property type="project" value="TreeGrafter"/>
</dbReference>
<dbReference type="GO" id="GO:0006412">
    <property type="term" value="P:translation"/>
    <property type="evidence" value="ECO:0007669"/>
    <property type="project" value="UniProtKB-KW"/>
</dbReference>
<dbReference type="CDD" id="cd03711">
    <property type="entry name" value="Tet_C"/>
    <property type="match status" value="1"/>
</dbReference>
<dbReference type="CDD" id="cd03690">
    <property type="entry name" value="Tet_II"/>
    <property type="match status" value="1"/>
</dbReference>
<dbReference type="CDD" id="cd16258">
    <property type="entry name" value="Tet_III"/>
    <property type="match status" value="1"/>
</dbReference>
<dbReference type="CDD" id="cd01684">
    <property type="entry name" value="Tet_like_IV"/>
    <property type="match status" value="1"/>
</dbReference>
<dbReference type="CDD" id="cd04168">
    <property type="entry name" value="TetM_like"/>
    <property type="match status" value="1"/>
</dbReference>
<dbReference type="Gene3D" id="3.30.230.10">
    <property type="match status" value="1"/>
</dbReference>
<dbReference type="Gene3D" id="3.30.70.240">
    <property type="match status" value="1"/>
</dbReference>
<dbReference type="Gene3D" id="3.30.70.870">
    <property type="entry name" value="Elongation Factor G (Translational Gtpase), domain 3"/>
    <property type="match status" value="1"/>
</dbReference>
<dbReference type="Gene3D" id="3.40.50.300">
    <property type="entry name" value="P-loop containing nucleotide triphosphate hydrolases"/>
    <property type="match status" value="1"/>
</dbReference>
<dbReference type="Gene3D" id="2.40.30.10">
    <property type="entry name" value="Translation factors"/>
    <property type="match status" value="1"/>
</dbReference>
<dbReference type="InterPro" id="IPR053905">
    <property type="entry name" value="EF-G-like_DII"/>
</dbReference>
<dbReference type="InterPro" id="IPR041095">
    <property type="entry name" value="EFG_II"/>
</dbReference>
<dbReference type="InterPro" id="IPR035647">
    <property type="entry name" value="EFG_III/V"/>
</dbReference>
<dbReference type="InterPro" id="IPR000640">
    <property type="entry name" value="EFG_V-like"/>
</dbReference>
<dbReference type="InterPro" id="IPR031157">
    <property type="entry name" value="G_TR_CS"/>
</dbReference>
<dbReference type="InterPro" id="IPR027417">
    <property type="entry name" value="P-loop_NTPase"/>
</dbReference>
<dbReference type="InterPro" id="IPR020568">
    <property type="entry name" value="Ribosomal_Su5_D2-typ_SF"/>
</dbReference>
<dbReference type="InterPro" id="IPR014721">
    <property type="entry name" value="Ribsml_uS5_D2-typ_fold_subgr"/>
</dbReference>
<dbReference type="InterPro" id="IPR005225">
    <property type="entry name" value="Small_GTP-bd"/>
</dbReference>
<dbReference type="InterPro" id="IPR000795">
    <property type="entry name" value="T_Tr_GTP-bd_dom"/>
</dbReference>
<dbReference type="InterPro" id="IPR035650">
    <property type="entry name" value="Tet_C"/>
</dbReference>
<dbReference type="InterPro" id="IPR009000">
    <property type="entry name" value="Transl_B-barrel_sf"/>
</dbReference>
<dbReference type="InterPro" id="IPR005517">
    <property type="entry name" value="Transl_elong_EFG/EF2_IV"/>
</dbReference>
<dbReference type="NCBIfam" id="TIGR00231">
    <property type="entry name" value="small_GTP"/>
    <property type="match status" value="1"/>
</dbReference>
<dbReference type="NCBIfam" id="NF012153">
    <property type="entry name" value="tet_protect"/>
    <property type="match status" value="1"/>
</dbReference>
<dbReference type="NCBIfam" id="NF012155">
    <property type="entry name" value="tet_protect_M"/>
    <property type="match status" value="1"/>
</dbReference>
<dbReference type="NCBIfam" id="NF033148">
    <property type="entry name" value="tet_protect_M_W"/>
    <property type="match status" value="1"/>
</dbReference>
<dbReference type="PANTHER" id="PTHR43261:SF1">
    <property type="entry name" value="RIBOSOME-RELEASING FACTOR 2, MITOCHONDRIAL"/>
    <property type="match status" value="1"/>
</dbReference>
<dbReference type="PANTHER" id="PTHR43261">
    <property type="entry name" value="TRANSLATION ELONGATION FACTOR G-RELATED"/>
    <property type="match status" value="1"/>
</dbReference>
<dbReference type="Pfam" id="PF22042">
    <property type="entry name" value="EF-G_D2"/>
    <property type="match status" value="1"/>
</dbReference>
<dbReference type="Pfam" id="PF00679">
    <property type="entry name" value="EFG_C"/>
    <property type="match status" value="1"/>
</dbReference>
<dbReference type="Pfam" id="PF14492">
    <property type="entry name" value="EFG_III"/>
    <property type="match status" value="1"/>
</dbReference>
<dbReference type="Pfam" id="PF03764">
    <property type="entry name" value="EFG_IV"/>
    <property type="match status" value="1"/>
</dbReference>
<dbReference type="Pfam" id="PF00009">
    <property type="entry name" value="GTP_EFTU"/>
    <property type="match status" value="1"/>
</dbReference>
<dbReference type="PRINTS" id="PR00315">
    <property type="entry name" value="ELONGATNFCT"/>
</dbReference>
<dbReference type="PRINTS" id="PR01037">
    <property type="entry name" value="TCRTETOQM"/>
</dbReference>
<dbReference type="SMART" id="SM00889">
    <property type="entry name" value="EFG_IV"/>
    <property type="match status" value="1"/>
</dbReference>
<dbReference type="SUPFAM" id="SSF54980">
    <property type="entry name" value="EF-G C-terminal domain-like"/>
    <property type="match status" value="2"/>
</dbReference>
<dbReference type="SUPFAM" id="SSF52540">
    <property type="entry name" value="P-loop containing nucleoside triphosphate hydrolases"/>
    <property type="match status" value="1"/>
</dbReference>
<dbReference type="SUPFAM" id="SSF54211">
    <property type="entry name" value="Ribosomal protein S5 domain 2-like"/>
    <property type="match status" value="1"/>
</dbReference>
<dbReference type="SUPFAM" id="SSF50447">
    <property type="entry name" value="Translation proteins"/>
    <property type="match status" value="1"/>
</dbReference>
<dbReference type="PROSITE" id="PS00301">
    <property type="entry name" value="G_TR_1"/>
    <property type="match status" value="1"/>
</dbReference>
<dbReference type="PROSITE" id="PS51722">
    <property type="entry name" value="G_TR_2"/>
    <property type="match status" value="1"/>
</dbReference>